<accession>Q75A07</accession>
<reference key="1">
    <citation type="journal article" date="2004" name="Science">
        <title>The Ashbya gossypii genome as a tool for mapping the ancient Saccharomyces cerevisiae genome.</title>
        <authorList>
            <person name="Dietrich F.S."/>
            <person name="Voegeli S."/>
            <person name="Brachat S."/>
            <person name="Lerch A."/>
            <person name="Gates K."/>
            <person name="Steiner S."/>
            <person name="Mohr C."/>
            <person name="Poehlmann R."/>
            <person name="Luedi P."/>
            <person name="Choi S."/>
            <person name="Wing R.A."/>
            <person name="Flavier A."/>
            <person name="Gaffney T.D."/>
            <person name="Philippsen P."/>
        </authorList>
    </citation>
    <scope>NUCLEOTIDE SEQUENCE [LARGE SCALE GENOMIC DNA]</scope>
    <source>
        <strain>ATCC 10895 / CBS 109.51 / FGSC 9923 / NRRL Y-1056</strain>
    </source>
</reference>
<reference key="2">
    <citation type="journal article" date="2013" name="G3 (Bethesda)">
        <title>Genomes of Ashbya fungi isolated from insects reveal four mating-type loci, numerous translocations, lack of transposons, and distinct gene duplications.</title>
        <authorList>
            <person name="Dietrich F.S."/>
            <person name="Voegeli S."/>
            <person name="Kuo S."/>
            <person name="Philippsen P."/>
        </authorList>
    </citation>
    <scope>GENOME REANNOTATION</scope>
    <source>
        <strain>ATCC 10895 / CBS 109.51 / FGSC 9923 / NRRL Y-1056</strain>
    </source>
</reference>
<name>NAGS_EREGS</name>
<gene>
    <name type="primary">ARG2</name>
    <name type="ordered locus">ADR120C</name>
</gene>
<comment type="function">
    <text evidence="1">N-acetylglutamate synthase involved in arginine biosynthesis.</text>
</comment>
<comment type="catalytic activity">
    <reaction>
        <text>L-glutamate + acetyl-CoA = N-acetyl-L-glutamate + CoA + H(+)</text>
        <dbReference type="Rhea" id="RHEA:24292"/>
        <dbReference type="ChEBI" id="CHEBI:15378"/>
        <dbReference type="ChEBI" id="CHEBI:29985"/>
        <dbReference type="ChEBI" id="CHEBI:44337"/>
        <dbReference type="ChEBI" id="CHEBI:57287"/>
        <dbReference type="ChEBI" id="CHEBI:57288"/>
        <dbReference type="EC" id="2.3.1.1"/>
    </reaction>
</comment>
<comment type="pathway">
    <text>Amino-acid biosynthesis; L-arginine biosynthesis; N(2)-acetyl-L-ornithine from L-glutamate: step 1/4.</text>
</comment>
<comment type="subcellular location">
    <subcellularLocation>
        <location evidence="1">Mitochondrion</location>
    </subcellularLocation>
</comment>
<comment type="similarity">
    <text evidence="4">Belongs to the acetyltransferase family.</text>
</comment>
<organism>
    <name type="scientific">Eremothecium gossypii (strain ATCC 10895 / CBS 109.51 / FGSC 9923 / NRRL Y-1056)</name>
    <name type="common">Yeast</name>
    <name type="synonym">Ashbya gossypii</name>
    <dbReference type="NCBI Taxonomy" id="284811"/>
    <lineage>
        <taxon>Eukaryota</taxon>
        <taxon>Fungi</taxon>
        <taxon>Dikarya</taxon>
        <taxon>Ascomycota</taxon>
        <taxon>Saccharomycotina</taxon>
        <taxon>Saccharomycetes</taxon>
        <taxon>Saccharomycetales</taxon>
        <taxon>Saccharomycetaceae</taxon>
        <taxon>Eremothecium</taxon>
    </lineage>
</organism>
<protein>
    <recommendedName>
        <fullName>Amino-acid acetyltransferase, mitochondrial</fullName>
        <ecNumber>2.3.1.1</ecNumber>
    </recommendedName>
    <alternativeName>
        <fullName>Arginine-requiring protein 2</fullName>
    </alternativeName>
    <alternativeName>
        <fullName>Glutamate N-acetyltransferase</fullName>
    </alternativeName>
    <alternativeName>
        <fullName>N-acetylglutamate synthase</fullName>
        <shortName>AGS</shortName>
        <shortName>NAGS</shortName>
    </alternativeName>
</protein>
<keyword id="KW-0012">Acyltransferase</keyword>
<keyword id="KW-0028">Amino-acid biosynthesis</keyword>
<keyword id="KW-0496">Mitochondrion</keyword>
<keyword id="KW-1185">Reference proteome</keyword>
<keyword id="KW-0808">Transferase</keyword>
<keyword id="KW-0809">Transit peptide</keyword>
<sequence length="542" mass="61904">MLFRRLLTTKVGYHTPNYVNRRLILSVLKSTATRREAKDYLTKYGDPAVAYHCVLYLRGTKTFSAGLINDFAIMLGRLRLLGIRPLVVLSPSKHVMTESEILRETFYKHGLQSIPINEPMASGTRETILQNGASYNSIIPIIMPFVYHQQRAKRMLAEDEVAFMRELVAYMPCRIDKFFIINRYGGIPSSERHDNSHVFVNLSQEYGSLAEVLKQQITDLRHEMDDGLLAERRATDGSYKEFQYTTLTESLTDLELMSAVLSLLLPSSTGLITSMHSAVTNSRYNPLLYNVLTDRSLVSSSLPSFKRDPISDNAWYELPACGAKIGTQRANPIFSTTVLKQGVDIKLYDYSTLTKENSVGFHELLSTAGSAQLPAHKRVNLTKLKGIIEHSFDRNLDMSHYLKRINGKIASIIVIGDYEGIAILTYEGPEKRPFAYLDKFAVLPHLRGSLCISDVIFNLMFKKFGDELVWRSRRENVVNNWYFQRSVGVLDLSIDIGHGPKKDNIFKLFYYGGKKGTQFYDFDRLREYITYVRDIEPSWSRK</sequence>
<proteinExistence type="inferred from homology"/>
<evidence type="ECO:0000250" key="1"/>
<evidence type="ECO:0000255" key="2"/>
<evidence type="ECO:0000255" key="3">
    <source>
        <dbReference type="PROSITE-ProRule" id="PRU00532"/>
    </source>
</evidence>
<evidence type="ECO:0000305" key="4"/>
<dbReference type="EC" id="2.3.1.1"/>
<dbReference type="EMBL" id="AE016817">
    <property type="protein sequence ID" value="AAS52040.1"/>
    <property type="molecule type" value="Genomic_DNA"/>
</dbReference>
<dbReference type="RefSeq" id="NP_984216.1">
    <property type="nucleotide sequence ID" value="NM_209569.1"/>
</dbReference>
<dbReference type="SMR" id="Q75A07"/>
<dbReference type="FunCoup" id="Q75A07">
    <property type="interactions" value="113"/>
</dbReference>
<dbReference type="STRING" id="284811.Q75A07"/>
<dbReference type="EnsemblFungi" id="AAS52040">
    <property type="protein sequence ID" value="AAS52040"/>
    <property type="gene ID" value="AGOS_ADR120C"/>
</dbReference>
<dbReference type="GeneID" id="4620365"/>
<dbReference type="KEGG" id="ago:AGOS_ADR120C"/>
<dbReference type="eggNOG" id="KOG2436">
    <property type="taxonomic scope" value="Eukaryota"/>
</dbReference>
<dbReference type="HOGENOM" id="CLU_013088_0_0_1"/>
<dbReference type="InParanoid" id="Q75A07"/>
<dbReference type="OMA" id="HAWYELP"/>
<dbReference type="OrthoDB" id="5585968at2759"/>
<dbReference type="UniPathway" id="UPA00068">
    <property type="reaction ID" value="UER00106"/>
</dbReference>
<dbReference type="Proteomes" id="UP000000591">
    <property type="component" value="Chromosome IV"/>
</dbReference>
<dbReference type="GO" id="GO:0005759">
    <property type="term" value="C:mitochondrial matrix"/>
    <property type="evidence" value="ECO:0000318"/>
    <property type="project" value="GO_Central"/>
</dbReference>
<dbReference type="GO" id="GO:0106098">
    <property type="term" value="C:NAGS/NAGK complex"/>
    <property type="evidence" value="ECO:0007669"/>
    <property type="project" value="EnsemblFungi"/>
</dbReference>
<dbReference type="GO" id="GO:0004042">
    <property type="term" value="F:L-glutamate N-acetyltransferase activity"/>
    <property type="evidence" value="ECO:0000318"/>
    <property type="project" value="GO_Central"/>
</dbReference>
<dbReference type="GO" id="GO:0006526">
    <property type="term" value="P:L-arginine biosynthetic process"/>
    <property type="evidence" value="ECO:0000318"/>
    <property type="project" value="GO_Central"/>
</dbReference>
<dbReference type="GO" id="GO:0006592">
    <property type="term" value="P:ornithine biosynthetic process"/>
    <property type="evidence" value="ECO:0000318"/>
    <property type="project" value="GO_Central"/>
</dbReference>
<dbReference type="Gene3D" id="3.40.630.30">
    <property type="match status" value="1"/>
</dbReference>
<dbReference type="InterPro" id="IPR011190">
    <property type="entry name" value="GlcNAc_Synth_fun"/>
</dbReference>
<dbReference type="InterPro" id="IPR006855">
    <property type="entry name" value="Vertebrate-like_GNAT_dom"/>
</dbReference>
<dbReference type="PANTHER" id="PTHR23342:SF4">
    <property type="entry name" value="AMINO-ACID ACETYLTRANSFERASE, MITOCHONDRIAL"/>
    <property type="match status" value="1"/>
</dbReference>
<dbReference type="PANTHER" id="PTHR23342">
    <property type="entry name" value="N-ACETYLGLUTAMATE SYNTHASE"/>
    <property type="match status" value="1"/>
</dbReference>
<dbReference type="Pfam" id="PF04768">
    <property type="entry name" value="NAT"/>
    <property type="match status" value="1"/>
</dbReference>
<dbReference type="PIRSF" id="PIRSF007892">
    <property type="entry name" value="NAGS_fungal"/>
    <property type="match status" value="1"/>
</dbReference>
<dbReference type="PROSITE" id="PS51731">
    <property type="entry name" value="GNAT_NAGS"/>
    <property type="match status" value="1"/>
</dbReference>
<feature type="transit peptide" description="Mitochondrion" evidence="2">
    <location>
        <begin position="1"/>
        <end position="14"/>
    </location>
</feature>
<feature type="chain" id="PRO_0000372548" description="Amino-acid acetyltransferase, mitochondrial">
    <location>
        <begin position="15"/>
        <end position="542"/>
    </location>
</feature>
<feature type="domain" description="N-acetyltransferase" evidence="3">
    <location>
        <begin position="368"/>
        <end position="534"/>
    </location>
</feature>